<comment type="function">
    <text evidence="1">This is one of the proteins that binds to the 5S RNA in the ribosome where it forms part of the central protuberance.</text>
</comment>
<comment type="subunit">
    <text evidence="1">Part of the 50S ribosomal subunit; part of the 5S rRNA/L5/L18/L25 subcomplex. Contacts the 5S rRNA. Binds to the 5S rRNA independently of L5 and L18.</text>
</comment>
<comment type="similarity">
    <text evidence="1">Belongs to the bacterial ribosomal protein bL25 family. CTC subfamily.</text>
</comment>
<organism>
    <name type="scientific">Mycobacterium tuberculosis (strain CDC 1551 / Oshkosh)</name>
    <dbReference type="NCBI Taxonomy" id="83331"/>
    <lineage>
        <taxon>Bacteria</taxon>
        <taxon>Bacillati</taxon>
        <taxon>Actinomycetota</taxon>
        <taxon>Actinomycetes</taxon>
        <taxon>Mycobacteriales</taxon>
        <taxon>Mycobacteriaceae</taxon>
        <taxon>Mycobacterium</taxon>
        <taxon>Mycobacterium tuberculosis complex</taxon>
    </lineage>
</organism>
<reference key="1">
    <citation type="journal article" date="2002" name="J. Bacteriol.">
        <title>Whole-genome comparison of Mycobacterium tuberculosis clinical and laboratory strains.</title>
        <authorList>
            <person name="Fleischmann R.D."/>
            <person name="Alland D."/>
            <person name="Eisen J.A."/>
            <person name="Carpenter L."/>
            <person name="White O."/>
            <person name="Peterson J.D."/>
            <person name="DeBoy R.T."/>
            <person name="Dodson R.J."/>
            <person name="Gwinn M.L."/>
            <person name="Haft D.H."/>
            <person name="Hickey E.K."/>
            <person name="Kolonay J.F."/>
            <person name="Nelson W.C."/>
            <person name="Umayam L.A."/>
            <person name="Ermolaeva M.D."/>
            <person name="Salzberg S.L."/>
            <person name="Delcher A."/>
            <person name="Utterback T.R."/>
            <person name="Weidman J.F."/>
            <person name="Khouri H.M."/>
            <person name="Gill J."/>
            <person name="Mikula A."/>
            <person name="Bishai W."/>
            <person name="Jacobs W.R. Jr."/>
            <person name="Venter J.C."/>
            <person name="Fraser C.M."/>
        </authorList>
    </citation>
    <scope>NUCLEOTIDE SEQUENCE [LARGE SCALE GENOMIC DNA]</scope>
    <source>
        <strain>CDC 1551 / Oshkosh</strain>
    </source>
</reference>
<evidence type="ECO:0000255" key="1">
    <source>
        <dbReference type="HAMAP-Rule" id="MF_01334"/>
    </source>
</evidence>
<evidence type="ECO:0000256" key="2">
    <source>
        <dbReference type="SAM" id="MobiDB-lite"/>
    </source>
</evidence>
<evidence type="ECO:0000305" key="3"/>
<protein>
    <recommendedName>
        <fullName evidence="1">Large ribosomal subunit protein bL25</fullName>
    </recommendedName>
    <alternativeName>
        <fullName evidence="3">50S ribosomal protein L25</fullName>
    </alternativeName>
    <alternativeName>
        <fullName evidence="1">General stress protein CTC</fullName>
    </alternativeName>
</protein>
<keyword id="KW-1185">Reference proteome</keyword>
<keyword id="KW-0687">Ribonucleoprotein</keyword>
<keyword id="KW-0689">Ribosomal protein</keyword>
<keyword id="KW-0694">RNA-binding</keyword>
<keyword id="KW-0699">rRNA-binding</keyword>
<proteinExistence type="inferred from homology"/>
<accession>P9WHB4</accession>
<accession>L0T5G6</accession>
<accession>P66121</accession>
<accession>P96385</accession>
<dbReference type="EMBL" id="AE000516">
    <property type="protein sequence ID" value="AAK45294.1"/>
    <property type="molecule type" value="Genomic_DNA"/>
</dbReference>
<dbReference type="PIR" id="B70622">
    <property type="entry name" value="B70622"/>
</dbReference>
<dbReference type="RefSeq" id="WP_003405254.1">
    <property type="nucleotide sequence ID" value="NZ_KK341227.1"/>
</dbReference>
<dbReference type="SMR" id="P9WHB4"/>
<dbReference type="KEGG" id="mtc:MT1043"/>
<dbReference type="PATRIC" id="fig|83331.31.peg.1118"/>
<dbReference type="HOGENOM" id="CLU_075939_1_0_11"/>
<dbReference type="Proteomes" id="UP000001020">
    <property type="component" value="Chromosome"/>
</dbReference>
<dbReference type="GO" id="GO:0022625">
    <property type="term" value="C:cytosolic large ribosomal subunit"/>
    <property type="evidence" value="ECO:0007669"/>
    <property type="project" value="TreeGrafter"/>
</dbReference>
<dbReference type="GO" id="GO:0008097">
    <property type="term" value="F:5S rRNA binding"/>
    <property type="evidence" value="ECO:0007669"/>
    <property type="project" value="InterPro"/>
</dbReference>
<dbReference type="GO" id="GO:0003735">
    <property type="term" value="F:structural constituent of ribosome"/>
    <property type="evidence" value="ECO:0007669"/>
    <property type="project" value="InterPro"/>
</dbReference>
<dbReference type="GO" id="GO:0006412">
    <property type="term" value="P:translation"/>
    <property type="evidence" value="ECO:0007669"/>
    <property type="project" value="UniProtKB-UniRule"/>
</dbReference>
<dbReference type="CDD" id="cd00495">
    <property type="entry name" value="Ribosomal_L25_TL5_CTC"/>
    <property type="match status" value="1"/>
</dbReference>
<dbReference type="FunFam" id="2.170.120.20:FF:000010">
    <property type="entry name" value="50S ribosomal protein L25"/>
    <property type="match status" value="1"/>
</dbReference>
<dbReference type="FunFam" id="2.40.240.10:FF:000010">
    <property type="entry name" value="50S ribosomal protein L25"/>
    <property type="match status" value="1"/>
</dbReference>
<dbReference type="Gene3D" id="2.170.120.20">
    <property type="entry name" value="Ribosomal protein L25, beta domain"/>
    <property type="match status" value="1"/>
</dbReference>
<dbReference type="Gene3D" id="2.40.240.10">
    <property type="entry name" value="Ribosomal Protein L25, Chain P"/>
    <property type="match status" value="1"/>
</dbReference>
<dbReference type="HAMAP" id="MF_01334">
    <property type="entry name" value="Ribosomal_bL25_CTC"/>
    <property type="match status" value="1"/>
</dbReference>
<dbReference type="InterPro" id="IPR020056">
    <property type="entry name" value="Rbsml_bL25/Gln-tRNA_synth_N"/>
</dbReference>
<dbReference type="InterPro" id="IPR011035">
    <property type="entry name" value="Ribosomal_bL25/Gln-tRNA_synth"/>
</dbReference>
<dbReference type="InterPro" id="IPR020057">
    <property type="entry name" value="Ribosomal_bL25_b-dom"/>
</dbReference>
<dbReference type="InterPro" id="IPR037121">
    <property type="entry name" value="Ribosomal_bL25_C"/>
</dbReference>
<dbReference type="InterPro" id="IPR001021">
    <property type="entry name" value="Ribosomal_bL25_long"/>
</dbReference>
<dbReference type="InterPro" id="IPR029751">
    <property type="entry name" value="Ribosomal_L25_dom"/>
</dbReference>
<dbReference type="InterPro" id="IPR020930">
    <property type="entry name" value="Ribosomal_uL5_bac-type"/>
</dbReference>
<dbReference type="NCBIfam" id="TIGR00731">
    <property type="entry name" value="bL25_bact_ctc"/>
    <property type="match status" value="1"/>
</dbReference>
<dbReference type="NCBIfam" id="NF004131">
    <property type="entry name" value="PRK05618.2-1"/>
    <property type="match status" value="1"/>
</dbReference>
<dbReference type="PANTHER" id="PTHR33284">
    <property type="entry name" value="RIBOSOMAL PROTEIN L25/GLN-TRNA SYNTHETASE, ANTI-CODON-BINDING DOMAIN-CONTAINING PROTEIN"/>
    <property type="match status" value="1"/>
</dbReference>
<dbReference type="PANTHER" id="PTHR33284:SF1">
    <property type="entry name" value="RIBOSOMAL PROTEIN L25_GLN-TRNA SYNTHETASE, ANTI-CODON-BINDING DOMAIN-CONTAINING PROTEIN"/>
    <property type="match status" value="1"/>
</dbReference>
<dbReference type="Pfam" id="PF01386">
    <property type="entry name" value="Ribosomal_L25p"/>
    <property type="match status" value="1"/>
</dbReference>
<dbReference type="Pfam" id="PF14693">
    <property type="entry name" value="Ribosomal_TL5_C"/>
    <property type="match status" value="1"/>
</dbReference>
<dbReference type="SUPFAM" id="SSF50715">
    <property type="entry name" value="Ribosomal protein L25-like"/>
    <property type="match status" value="1"/>
</dbReference>
<name>RL25_MYCTO</name>
<sequence>MAKSASNQLRVTVRTETGKGASRRARRAGKIPAVLYGHGAEPQHLELPGHDYAAVLRHSGTNAVLTLDIAGKEQLALTKALHIHPIRRTIQHADLLVVRRGEKVVVEVSVVVEGQAGPDTLVTQETNSIEIEAEALSIPEQLTVSIEGAEPGTQLTAGQIALPAGVSLISDPDLLVVNVVKAPTAEELEGEVAGAEEAEEAAVEAGEAEAAGESE</sequence>
<gene>
    <name evidence="1" type="primary">rplY</name>
    <name evidence="1" type="synonym">ctc</name>
    <name type="ordered locus">MT1043</name>
</gene>
<feature type="chain" id="PRO_0000428216" description="Large ribosomal subunit protein bL25">
    <location>
        <begin position="1"/>
        <end position="215"/>
    </location>
</feature>
<feature type="region of interest" description="Disordered" evidence="2">
    <location>
        <begin position="1"/>
        <end position="25"/>
    </location>
</feature>
<feature type="region of interest" description="Disordered" evidence="2">
    <location>
        <begin position="187"/>
        <end position="215"/>
    </location>
</feature>
<feature type="compositionally biased region" description="Polar residues" evidence="2">
    <location>
        <begin position="1"/>
        <end position="10"/>
    </location>
</feature>